<comment type="function">
    <text evidence="2">Catalyzes the reversible conversion of alpha-D-glucosamine 6-phosphate (GlcN-6P) into beta-D-fructose 6-phosphate (Fru-6P) and ammonium ion, a regulatory reaction step in de novo uridine diphosphate-N-acetyl-alpha-D-glucosamine (UDP-GlcNAc) biosynthesis via hexosamine pathway.</text>
</comment>
<comment type="catalytic activity">
    <reaction evidence="2">
        <text>alpha-D-glucosamine 6-phosphate + H2O = beta-D-fructose 6-phosphate + NH4(+)</text>
        <dbReference type="Rhea" id="RHEA:12172"/>
        <dbReference type="ChEBI" id="CHEBI:15377"/>
        <dbReference type="ChEBI" id="CHEBI:28938"/>
        <dbReference type="ChEBI" id="CHEBI:57634"/>
        <dbReference type="ChEBI" id="CHEBI:75989"/>
        <dbReference type="EC" id="3.5.99.6"/>
    </reaction>
</comment>
<comment type="subunit">
    <text evidence="1">Homohexamer.</text>
</comment>
<comment type="similarity">
    <text evidence="3">Belongs to the glucosamine/galactosamine-6-phosphate isomerase family.</text>
</comment>
<dbReference type="EC" id="3.5.99.6" evidence="2"/>
<dbReference type="EMBL" id="AF050755">
    <property type="protein sequence ID" value="AAD02509.1"/>
    <property type="molecule type" value="Genomic_DNA"/>
</dbReference>
<dbReference type="RefSeq" id="XP_001709089.1">
    <property type="nucleotide sequence ID" value="XM_001709037.1"/>
</dbReference>
<dbReference type="SMR" id="O97440"/>
<dbReference type="KEGG" id="gla:GL50803_0010829"/>
<dbReference type="VEuPathDB" id="GiardiaDB:DHA2_10829"/>
<dbReference type="VEuPathDB" id="GiardiaDB:GL50803_0010829"/>
<dbReference type="VEuPathDB" id="GiardiaDB:QR46_1821"/>
<dbReference type="eggNOG" id="KOG3148">
    <property type="taxonomic scope" value="Eukaryota"/>
</dbReference>
<dbReference type="OrthoDB" id="7663298at2759"/>
<dbReference type="GO" id="GO:0005737">
    <property type="term" value="C:cytoplasm"/>
    <property type="evidence" value="ECO:0007669"/>
    <property type="project" value="TreeGrafter"/>
</dbReference>
<dbReference type="GO" id="GO:0004342">
    <property type="term" value="F:glucosamine-6-phosphate deaminase activity"/>
    <property type="evidence" value="ECO:0007669"/>
    <property type="project" value="UniProtKB-EC"/>
</dbReference>
<dbReference type="GO" id="GO:0042802">
    <property type="term" value="F:identical protein binding"/>
    <property type="evidence" value="ECO:0007669"/>
    <property type="project" value="TreeGrafter"/>
</dbReference>
<dbReference type="GO" id="GO:0005975">
    <property type="term" value="P:carbohydrate metabolic process"/>
    <property type="evidence" value="ECO:0007669"/>
    <property type="project" value="InterPro"/>
</dbReference>
<dbReference type="GO" id="GO:0006043">
    <property type="term" value="P:glucosamine catabolic process"/>
    <property type="evidence" value="ECO:0007669"/>
    <property type="project" value="TreeGrafter"/>
</dbReference>
<dbReference type="GO" id="GO:0006046">
    <property type="term" value="P:N-acetylglucosamine catabolic process"/>
    <property type="evidence" value="ECO:0007669"/>
    <property type="project" value="TreeGrafter"/>
</dbReference>
<dbReference type="GO" id="GO:0019262">
    <property type="term" value="P:N-acetylneuraminate catabolic process"/>
    <property type="evidence" value="ECO:0007669"/>
    <property type="project" value="TreeGrafter"/>
</dbReference>
<dbReference type="CDD" id="cd01399">
    <property type="entry name" value="GlcN6P_deaminase"/>
    <property type="match status" value="1"/>
</dbReference>
<dbReference type="FunFam" id="3.40.50.1360:FF:000003">
    <property type="entry name" value="Glucosamine-6-phosphate deaminase"/>
    <property type="match status" value="1"/>
</dbReference>
<dbReference type="Gene3D" id="3.40.50.1360">
    <property type="match status" value="1"/>
</dbReference>
<dbReference type="HAMAP" id="MF_01241">
    <property type="entry name" value="GlcN6P_deamin"/>
    <property type="match status" value="1"/>
</dbReference>
<dbReference type="InterPro" id="IPR006148">
    <property type="entry name" value="Glc/Gal-6P_isomerase"/>
</dbReference>
<dbReference type="InterPro" id="IPR004547">
    <property type="entry name" value="Glucosamine6P_isomerase"/>
</dbReference>
<dbReference type="InterPro" id="IPR018321">
    <property type="entry name" value="Glucosamine6P_isomerase_CS"/>
</dbReference>
<dbReference type="InterPro" id="IPR037171">
    <property type="entry name" value="NagB/RpiA_transferase-like"/>
</dbReference>
<dbReference type="NCBIfam" id="TIGR00502">
    <property type="entry name" value="nagB"/>
    <property type="match status" value="1"/>
</dbReference>
<dbReference type="PANTHER" id="PTHR11280">
    <property type="entry name" value="GLUCOSAMINE-6-PHOSPHATE ISOMERASE"/>
    <property type="match status" value="1"/>
</dbReference>
<dbReference type="PANTHER" id="PTHR11280:SF5">
    <property type="entry name" value="GLUCOSAMINE-6-PHOSPHATE ISOMERASE"/>
    <property type="match status" value="1"/>
</dbReference>
<dbReference type="Pfam" id="PF01182">
    <property type="entry name" value="Glucosamine_iso"/>
    <property type="match status" value="1"/>
</dbReference>
<dbReference type="SUPFAM" id="SSF100950">
    <property type="entry name" value="NagB/RpiA/CoA transferase-like"/>
    <property type="match status" value="1"/>
</dbReference>
<dbReference type="PROSITE" id="PS01161">
    <property type="entry name" value="GLC_GALNAC_ISOMERASE"/>
    <property type="match status" value="1"/>
</dbReference>
<keyword id="KW-0119">Carbohydrate metabolism</keyword>
<keyword id="KW-0378">Hydrolase</keyword>
<proteinExistence type="inferred from homology"/>
<name>GNPI2_GIAIN</name>
<sequence>MTVCVAQAERGASELESKAMVKKSNDAALLVAHRIAEVVRSKPNCVLGLATGSTPIPVYQELARLHREEGLDFSQVRTFNLDEYAGLPPTHDQSYRFFMEEHLFSKVNIKPENVHFLSGLAIRAEDECIRYENALQTIGPCDVWLLGIGHNGHIAFNEPGSPRDSRTRVVCLTQSTIDANARFFGNDKSKVPTKALSVGIATIMESREILLLATGESKCEAVTKAIVGEPTNAVPASLLQRHPRCCFYVDEAAGAEVAETVTE</sequence>
<accession>O97440</accession>
<evidence type="ECO:0000250" key="1"/>
<evidence type="ECO:0000250" key="2">
    <source>
        <dbReference type="UniProtKB" id="Q8TDQ7"/>
    </source>
</evidence>
<evidence type="ECO:0000305" key="3"/>
<organism>
    <name type="scientific">Giardia intestinalis</name>
    <name type="common">Giardia lamblia</name>
    <dbReference type="NCBI Taxonomy" id="5741"/>
    <lineage>
        <taxon>Eukaryota</taxon>
        <taxon>Metamonada</taxon>
        <taxon>Diplomonadida</taxon>
        <taxon>Hexamitidae</taxon>
        <taxon>Giardiinae</taxon>
        <taxon>Giardia</taxon>
    </lineage>
</organism>
<gene>
    <name type="primary">GPI2</name>
</gene>
<reference key="1">
    <citation type="submission" date="1998-02" db="EMBL/GenBank/DDBJ databases">
        <title>Cloning of two Giardia glucosamine 6-phosphate isomerase genes only one of which is transcriptionally activated during encystment.</title>
        <authorList>
            <person name="van Keulen H."/>
            <person name="Steimle P.A."/>
            <person name="Bulik D.A."/>
            <person name="Borowiak R.K."/>
            <person name="Jarroll E.L."/>
        </authorList>
    </citation>
    <scope>NUCLEOTIDE SEQUENCE [GENOMIC DNA]</scope>
    <source>
        <strain>MR4 / Polish genotype</strain>
    </source>
</reference>
<feature type="chain" id="PRO_0000160128" description="Glucosamine-6-phosphate deaminase 2">
    <location>
        <begin position="1"/>
        <end position="263"/>
    </location>
</feature>
<feature type="active site" description="Proton acceptor; for enolization step" evidence="1">
    <location>
        <position position="82"/>
    </location>
</feature>
<feature type="active site" description="For ring-opening step" evidence="1">
    <location>
        <position position="151"/>
    </location>
</feature>
<feature type="active site" description="Proton acceptor; for ring-opening step" evidence="1">
    <location>
        <position position="153"/>
    </location>
</feature>
<feature type="active site" description="For ring-opening step" evidence="1">
    <location>
        <position position="158"/>
    </location>
</feature>
<protein>
    <recommendedName>
        <fullName>Glucosamine-6-phosphate deaminase 2</fullName>
        <shortName>GNPDA 2</shortName>
        <shortName>GlcN6P deaminase 2</shortName>
        <ecNumber evidence="2">3.5.99.6</ecNumber>
    </recommendedName>
    <alternativeName>
        <fullName>Glucosamine-6-phosphate isomerase 2</fullName>
    </alternativeName>
</protein>